<keyword id="KW-0028">Amino-acid biosynthesis</keyword>
<keyword id="KW-0963">Cytoplasm</keyword>
<keyword id="KW-0378">Hydrolase</keyword>
<keyword id="KW-0460">Magnesium</keyword>
<keyword id="KW-0479">Metal-binding</keyword>
<keyword id="KW-0486">Methionine biosynthesis</keyword>
<keyword id="KW-0539">Nucleus</keyword>
<keyword id="KW-1185">Reference proteome</keyword>
<feature type="chain" id="PRO_0000394019" description="Enolase-phosphatase E1">
    <location>
        <begin position="1"/>
        <end position="252"/>
    </location>
</feature>
<feature type="binding site" evidence="1">
    <location>
        <position position="18"/>
    </location>
    <ligand>
        <name>Mg(2+)</name>
        <dbReference type="ChEBI" id="CHEBI:18420"/>
    </ligand>
</feature>
<feature type="binding site" evidence="1">
    <location>
        <position position="20"/>
    </location>
    <ligand>
        <name>Mg(2+)</name>
        <dbReference type="ChEBI" id="CHEBI:18420"/>
    </ligand>
</feature>
<feature type="binding site" evidence="1">
    <location>
        <begin position="149"/>
        <end position="150"/>
    </location>
    <ligand>
        <name>substrate</name>
    </ligand>
</feature>
<feature type="binding site" evidence="1">
    <location>
        <position position="184"/>
    </location>
    <ligand>
        <name>substrate</name>
    </ligand>
</feature>
<feature type="binding site" evidence="1">
    <location>
        <position position="209"/>
    </location>
    <ligand>
        <name>Mg(2+)</name>
        <dbReference type="ChEBI" id="CHEBI:18420"/>
    </ligand>
</feature>
<proteinExistence type="inferred from homology"/>
<gene>
    <name type="ORF">NAEGRDRAFT_60166</name>
</gene>
<sequence length="252" mass="28752">MSAVKRISVSKYKTFMFDIEGTTTPIVFVAENLFPYIRKSLKTHIEETWESEETKKDVLSLKEQAEQDANSQSDFKDAPQINIDSQQSVIDNVVYNMDKDRKMTALKQLQGHMWRSGYESGNILGEVYDDAFDFFERIKKQGKNIYIYSSGSVQAQKLLFQYSTHGNLLPYFVDHFDTSNIGNKLEKSSYVKILERTGIPNSDILFLTDNIGEAIAAREAGIDSVLSVRPGTMKLPEDHTFEAVTSFEHLEF</sequence>
<dbReference type="EC" id="3.1.3.77" evidence="1"/>
<dbReference type="EMBL" id="GG738845">
    <property type="protein sequence ID" value="EFC50825.1"/>
    <property type="molecule type" value="Genomic_DNA"/>
</dbReference>
<dbReference type="RefSeq" id="XP_002683569.1">
    <property type="nucleotide sequence ID" value="XM_002683523.1"/>
</dbReference>
<dbReference type="SMR" id="D2UYP1"/>
<dbReference type="FunCoup" id="D2UYP1">
    <property type="interactions" value="309"/>
</dbReference>
<dbReference type="STRING" id="5762.D2UYP1"/>
<dbReference type="EnsemblProtists" id="EFC50825">
    <property type="protein sequence ID" value="EFC50825"/>
    <property type="gene ID" value="NAEGRDRAFT_60166"/>
</dbReference>
<dbReference type="GeneID" id="8863627"/>
<dbReference type="VEuPathDB" id="AmoebaDB:NAEGRDRAFT_60166"/>
<dbReference type="eggNOG" id="KOG2630">
    <property type="taxonomic scope" value="Eukaryota"/>
</dbReference>
<dbReference type="InParanoid" id="D2UYP1"/>
<dbReference type="OMA" id="LQGMVWE"/>
<dbReference type="OrthoDB" id="272500at2759"/>
<dbReference type="UniPathway" id="UPA00904">
    <property type="reaction ID" value="UER00876"/>
</dbReference>
<dbReference type="UniPathway" id="UPA00904">
    <property type="reaction ID" value="UER00877"/>
</dbReference>
<dbReference type="Proteomes" id="UP000006671">
    <property type="component" value="Unassembled WGS sequence"/>
</dbReference>
<dbReference type="GO" id="GO:0005737">
    <property type="term" value="C:cytoplasm"/>
    <property type="evidence" value="ECO:0007669"/>
    <property type="project" value="UniProtKB-SubCell"/>
</dbReference>
<dbReference type="GO" id="GO:0005634">
    <property type="term" value="C:nucleus"/>
    <property type="evidence" value="ECO:0007669"/>
    <property type="project" value="UniProtKB-SubCell"/>
</dbReference>
<dbReference type="GO" id="GO:0043874">
    <property type="term" value="F:acireductone synthase activity"/>
    <property type="evidence" value="ECO:0007669"/>
    <property type="project" value="UniProtKB-EC"/>
</dbReference>
<dbReference type="GO" id="GO:0000287">
    <property type="term" value="F:magnesium ion binding"/>
    <property type="evidence" value="ECO:0007669"/>
    <property type="project" value="UniProtKB-UniRule"/>
</dbReference>
<dbReference type="GO" id="GO:0019509">
    <property type="term" value="P:L-methionine salvage from methylthioadenosine"/>
    <property type="evidence" value="ECO:0007669"/>
    <property type="project" value="UniProtKB-UniRule"/>
</dbReference>
<dbReference type="CDD" id="cd01629">
    <property type="entry name" value="HAD_EP"/>
    <property type="match status" value="1"/>
</dbReference>
<dbReference type="Gene3D" id="1.10.720.60">
    <property type="match status" value="1"/>
</dbReference>
<dbReference type="Gene3D" id="3.40.50.1000">
    <property type="entry name" value="HAD superfamily/HAD-like"/>
    <property type="match status" value="1"/>
</dbReference>
<dbReference type="HAMAP" id="MF_03117">
    <property type="entry name" value="Salvage_MtnC_euk"/>
    <property type="match status" value="1"/>
</dbReference>
<dbReference type="InterPro" id="IPR023943">
    <property type="entry name" value="Enolase-ppase_E1"/>
</dbReference>
<dbReference type="InterPro" id="IPR027511">
    <property type="entry name" value="ENOPH1_eukaryotes"/>
</dbReference>
<dbReference type="InterPro" id="IPR036412">
    <property type="entry name" value="HAD-like_sf"/>
</dbReference>
<dbReference type="InterPro" id="IPR006439">
    <property type="entry name" value="HAD-SF_hydro_IA"/>
</dbReference>
<dbReference type="InterPro" id="IPR023214">
    <property type="entry name" value="HAD_sf"/>
</dbReference>
<dbReference type="NCBIfam" id="TIGR01691">
    <property type="entry name" value="enolase-ppase"/>
    <property type="match status" value="1"/>
</dbReference>
<dbReference type="NCBIfam" id="TIGR01549">
    <property type="entry name" value="HAD-SF-IA-v1"/>
    <property type="match status" value="1"/>
</dbReference>
<dbReference type="PANTHER" id="PTHR20371">
    <property type="entry name" value="ENOLASE-PHOSPHATASE E1"/>
    <property type="match status" value="1"/>
</dbReference>
<dbReference type="PANTHER" id="PTHR20371:SF1">
    <property type="entry name" value="ENOLASE-PHOSPHATASE E1"/>
    <property type="match status" value="1"/>
</dbReference>
<dbReference type="Pfam" id="PF00702">
    <property type="entry name" value="Hydrolase"/>
    <property type="match status" value="1"/>
</dbReference>
<dbReference type="SFLD" id="SFLDG01133">
    <property type="entry name" value="C1.5.4:_Enolase-phosphatase_Li"/>
    <property type="match status" value="1"/>
</dbReference>
<dbReference type="SFLD" id="SFLDF00044">
    <property type="entry name" value="enolase-phosphatase"/>
    <property type="match status" value="1"/>
</dbReference>
<dbReference type="SUPFAM" id="SSF56784">
    <property type="entry name" value="HAD-like"/>
    <property type="match status" value="1"/>
</dbReference>
<accession>D2UYP1</accession>
<comment type="function">
    <text evidence="1">Bifunctional enzyme that catalyzes the enolization of 2,3-diketo-5-methylthiopentyl-1-phosphate (DK-MTP-1-P) into the intermediate 2-hydroxy-3-keto-5-methylthiopentenyl-1-phosphate (HK-MTPenyl-1-P), which is then dephosphorylated to form the acireductone 1,2-dihydroxy-3-keto-5-methylthiopentene (DHK-MTPene).</text>
</comment>
<comment type="catalytic activity">
    <reaction evidence="1">
        <text>5-methylsulfanyl-2,3-dioxopentyl phosphate + H2O = 1,2-dihydroxy-5-(methylsulfanyl)pent-1-en-3-one + phosphate</text>
        <dbReference type="Rhea" id="RHEA:21700"/>
        <dbReference type="ChEBI" id="CHEBI:15377"/>
        <dbReference type="ChEBI" id="CHEBI:43474"/>
        <dbReference type="ChEBI" id="CHEBI:49252"/>
        <dbReference type="ChEBI" id="CHEBI:58828"/>
        <dbReference type="EC" id="3.1.3.77"/>
    </reaction>
</comment>
<comment type="cofactor">
    <cofactor evidence="1">
        <name>Mg(2+)</name>
        <dbReference type="ChEBI" id="CHEBI:18420"/>
    </cofactor>
    <text evidence="1">Binds 1 Mg(2+) ion per subunit.</text>
</comment>
<comment type="pathway">
    <text evidence="1">Amino-acid biosynthesis; L-methionine biosynthesis via salvage pathway; L-methionine from S-methyl-5-thio-alpha-D-ribose 1-phosphate: step 3/6.</text>
</comment>
<comment type="pathway">
    <text evidence="1">Amino-acid biosynthesis; L-methionine biosynthesis via salvage pathway; L-methionine from S-methyl-5-thio-alpha-D-ribose 1-phosphate: step 4/6.</text>
</comment>
<comment type="subunit">
    <text evidence="1">Monomer.</text>
</comment>
<comment type="subcellular location">
    <subcellularLocation>
        <location evidence="1">Cytoplasm</location>
    </subcellularLocation>
    <subcellularLocation>
        <location evidence="1">Nucleus</location>
    </subcellularLocation>
</comment>
<comment type="similarity">
    <text evidence="1">Belongs to the HAD-like hydrolase superfamily. MasA/MtnC family.</text>
</comment>
<name>ENOPH_NAEGR</name>
<reference key="1">
    <citation type="journal article" date="2010" name="Cell">
        <title>The genome of Naegleria gruberi illuminates early eukaryotic versatility.</title>
        <authorList>
            <person name="Fritz-Laylin L.K."/>
            <person name="Prochnik S.E."/>
            <person name="Ginger M.L."/>
            <person name="Dacks J.B."/>
            <person name="Carpenter M.L."/>
            <person name="Field M.C."/>
            <person name="Kuo A."/>
            <person name="Paredez A."/>
            <person name="Chapman J."/>
            <person name="Pham J."/>
            <person name="Shu S."/>
            <person name="Neupane R."/>
            <person name="Cipriano M."/>
            <person name="Mancuso J."/>
            <person name="Tu H."/>
            <person name="Salamov A."/>
            <person name="Lindquist E."/>
            <person name="Shapiro H."/>
            <person name="Lucas S."/>
            <person name="Grigoriev I.V."/>
            <person name="Cande W.Z."/>
            <person name="Fulton C."/>
            <person name="Rokhsar D.S."/>
            <person name="Dawson S.C."/>
        </authorList>
    </citation>
    <scope>NUCLEOTIDE SEQUENCE [LARGE SCALE GENOMIC DNA]</scope>
    <source>
        <strain>ATCC 30224 / NEG-M</strain>
    </source>
</reference>
<organism>
    <name type="scientific">Naegleria gruberi</name>
    <name type="common">Amoeba</name>
    <dbReference type="NCBI Taxonomy" id="5762"/>
    <lineage>
        <taxon>Eukaryota</taxon>
        <taxon>Discoba</taxon>
        <taxon>Heterolobosea</taxon>
        <taxon>Tetramitia</taxon>
        <taxon>Eutetramitia</taxon>
        <taxon>Vahlkampfiidae</taxon>
        <taxon>Naegleria</taxon>
    </lineage>
</organism>
<protein>
    <recommendedName>
        <fullName evidence="1">Enolase-phosphatase E1</fullName>
        <ecNumber evidence="1">3.1.3.77</ecNumber>
    </recommendedName>
    <alternativeName>
        <fullName evidence="1">2,3-diketo-5-methylthio-1-phosphopentane phosphatase</fullName>
    </alternativeName>
</protein>
<evidence type="ECO:0000255" key="1">
    <source>
        <dbReference type="HAMAP-Rule" id="MF_03117"/>
    </source>
</evidence>